<protein>
    <recommendedName>
        <fullName evidence="1">L-seryl-tRNA(Sec) selenium transferase</fullName>
        <ecNumber evidence="1">2.9.1.1</ecNumber>
    </recommendedName>
    <alternativeName>
        <fullName evidence="1">Selenocysteine synthase</fullName>
        <shortName evidence="1">Sec synthase</shortName>
    </alternativeName>
    <alternativeName>
        <fullName evidence="1">Selenocysteinyl-tRNA(Sec) synthase</fullName>
    </alternativeName>
</protein>
<gene>
    <name evidence="1" type="primary">selA</name>
    <name type="ordered locus">SSON_3817</name>
</gene>
<name>SELA_SHISS</name>
<sequence length="463" mass="50697">MTTETRSLYSQLPAIDRLLRDSSFLSLRDTYGHTRVVELLRQMLDEAREVIRDSQTLPAWCENWAQEVDARLTKEAQSALRPVINLTGTVLHTNLGRALQAEAAVEAVAQAMRSPVTLEYDLDDAGRGHRDRALAQLLCRITGAEDACIVNNNAAAVLLMLAATASGKEVVVSRGELVEIGGAFRIPDVMRQAGCTLHEVGTTNRTHANDYRQAVNENTALLMKVHTSNYSIQGFTKAIDEAELVALGKELDVPVVTDLGSGSLVDLSQYGLPKEPMPQELIAAGVSLVSFSGDKLLGGPQAGIIVGKKEMIARLQSHPLKRALRADKMTLAALEATLRLYLHPEALSEKLPTLRLLTRSAEVIQIQAQRLQAPLAAHYGAEFAVQVMPCLSQIGSGSLPVDRLPSAALTFTPHDGRGSHLESLAARWRELPVPMIGRIYDGRLWLDLRCLEDEQRFLEMLLK</sequence>
<proteinExistence type="inferred from homology"/>
<dbReference type="EC" id="2.9.1.1" evidence="1"/>
<dbReference type="EMBL" id="CP000038">
    <property type="protein sequence ID" value="AAZ90359.1"/>
    <property type="molecule type" value="Genomic_DNA"/>
</dbReference>
<dbReference type="RefSeq" id="WP_000206246.1">
    <property type="nucleotide sequence ID" value="NC_007384.1"/>
</dbReference>
<dbReference type="SMR" id="Q3YVV3"/>
<dbReference type="KEGG" id="ssn:SSON_3817"/>
<dbReference type="HOGENOM" id="CLU_038142_1_0_6"/>
<dbReference type="UniPathway" id="UPA00906">
    <property type="reaction ID" value="UER00896"/>
</dbReference>
<dbReference type="Proteomes" id="UP000002529">
    <property type="component" value="Chromosome"/>
</dbReference>
<dbReference type="GO" id="GO:0005737">
    <property type="term" value="C:cytoplasm"/>
    <property type="evidence" value="ECO:0007669"/>
    <property type="project" value="UniProtKB-SubCell"/>
</dbReference>
<dbReference type="GO" id="GO:0004125">
    <property type="term" value="F:L-seryl-tRNA(Sec) selenium transferase activity"/>
    <property type="evidence" value="ECO:0007669"/>
    <property type="project" value="UniProtKB-UniRule"/>
</dbReference>
<dbReference type="GO" id="GO:0001717">
    <property type="term" value="P:conversion of seryl-tRNAsec to selenocys-tRNAsec"/>
    <property type="evidence" value="ECO:0007669"/>
    <property type="project" value="UniProtKB-UniRule"/>
</dbReference>
<dbReference type="GO" id="GO:0001514">
    <property type="term" value="P:selenocysteine incorporation"/>
    <property type="evidence" value="ECO:0007669"/>
    <property type="project" value="UniProtKB-UniRule"/>
</dbReference>
<dbReference type="FunFam" id="3.40.640.10:FF:000028">
    <property type="entry name" value="L-seryl-tRNA(Sec) selenium transferase"/>
    <property type="match status" value="1"/>
</dbReference>
<dbReference type="FunFam" id="3.90.1150.180:FF:000001">
    <property type="entry name" value="L-seryl-tRNA(Sec) selenium transferase"/>
    <property type="match status" value="1"/>
</dbReference>
<dbReference type="Gene3D" id="3.90.1150.180">
    <property type="match status" value="1"/>
</dbReference>
<dbReference type="Gene3D" id="3.40.640.10">
    <property type="entry name" value="Type I PLP-dependent aspartate aminotransferase-like (Major domain)"/>
    <property type="match status" value="1"/>
</dbReference>
<dbReference type="HAMAP" id="MF_00423">
    <property type="entry name" value="SelA"/>
    <property type="match status" value="1"/>
</dbReference>
<dbReference type="InterPro" id="IPR015424">
    <property type="entry name" value="PyrdxlP-dep_Trfase"/>
</dbReference>
<dbReference type="InterPro" id="IPR015421">
    <property type="entry name" value="PyrdxlP-dep_Trfase_major"/>
</dbReference>
<dbReference type="InterPro" id="IPR018319">
    <property type="entry name" value="SelA-like"/>
</dbReference>
<dbReference type="InterPro" id="IPR004534">
    <property type="entry name" value="SelA_trans"/>
</dbReference>
<dbReference type="InterPro" id="IPR025862">
    <property type="entry name" value="SelA_trans_N_dom"/>
</dbReference>
<dbReference type="NCBIfam" id="TIGR00474">
    <property type="entry name" value="selA"/>
    <property type="match status" value="1"/>
</dbReference>
<dbReference type="PANTHER" id="PTHR32328">
    <property type="entry name" value="L-SERYL-TRNA(SEC) SELENIUM TRANSFERASE"/>
    <property type="match status" value="1"/>
</dbReference>
<dbReference type="PANTHER" id="PTHR32328:SF0">
    <property type="entry name" value="L-SERYL-TRNA(SEC) SELENIUM TRANSFERASE"/>
    <property type="match status" value="1"/>
</dbReference>
<dbReference type="Pfam" id="PF12390">
    <property type="entry name" value="Se-cys_synth_N"/>
    <property type="match status" value="1"/>
</dbReference>
<dbReference type="Pfam" id="PF03841">
    <property type="entry name" value="SelA"/>
    <property type="match status" value="1"/>
</dbReference>
<dbReference type="SUPFAM" id="SSF53383">
    <property type="entry name" value="PLP-dependent transferases"/>
    <property type="match status" value="1"/>
</dbReference>
<reference key="1">
    <citation type="journal article" date="2005" name="Nucleic Acids Res.">
        <title>Genome dynamics and diversity of Shigella species, the etiologic agents of bacillary dysentery.</title>
        <authorList>
            <person name="Yang F."/>
            <person name="Yang J."/>
            <person name="Zhang X."/>
            <person name="Chen L."/>
            <person name="Jiang Y."/>
            <person name="Yan Y."/>
            <person name="Tang X."/>
            <person name="Wang J."/>
            <person name="Xiong Z."/>
            <person name="Dong J."/>
            <person name="Xue Y."/>
            <person name="Zhu Y."/>
            <person name="Xu X."/>
            <person name="Sun L."/>
            <person name="Chen S."/>
            <person name="Nie H."/>
            <person name="Peng J."/>
            <person name="Xu J."/>
            <person name="Wang Y."/>
            <person name="Yuan Z."/>
            <person name="Wen Y."/>
            <person name="Yao Z."/>
            <person name="Shen Y."/>
            <person name="Qiang B."/>
            <person name="Hou Y."/>
            <person name="Yu J."/>
            <person name="Jin Q."/>
        </authorList>
    </citation>
    <scope>NUCLEOTIDE SEQUENCE [LARGE SCALE GENOMIC DNA]</scope>
    <source>
        <strain>Ss046</strain>
    </source>
</reference>
<keyword id="KW-0963">Cytoplasm</keyword>
<keyword id="KW-0648">Protein biosynthesis</keyword>
<keyword id="KW-0663">Pyridoxal phosphate</keyword>
<keyword id="KW-1185">Reference proteome</keyword>
<keyword id="KW-0711">Selenium</keyword>
<keyword id="KW-0808">Transferase</keyword>
<feature type="chain" id="PRO_1000050384" description="L-seryl-tRNA(Sec) selenium transferase">
    <location>
        <begin position="1"/>
        <end position="463"/>
    </location>
</feature>
<feature type="modified residue" description="N6-(pyridoxal phosphate)lysine" evidence="1">
    <location>
        <position position="295"/>
    </location>
</feature>
<organism>
    <name type="scientific">Shigella sonnei (strain Ss046)</name>
    <dbReference type="NCBI Taxonomy" id="300269"/>
    <lineage>
        <taxon>Bacteria</taxon>
        <taxon>Pseudomonadati</taxon>
        <taxon>Pseudomonadota</taxon>
        <taxon>Gammaproteobacteria</taxon>
        <taxon>Enterobacterales</taxon>
        <taxon>Enterobacteriaceae</taxon>
        <taxon>Shigella</taxon>
    </lineage>
</organism>
<comment type="function">
    <text evidence="1">Converts seryl-tRNA(Sec) to selenocysteinyl-tRNA(Sec) required for selenoprotein biosynthesis.</text>
</comment>
<comment type="catalytic activity">
    <reaction evidence="1">
        <text>L-seryl-tRNA(Sec) + selenophosphate + H(+) = L-selenocysteinyl-tRNA(Sec) + phosphate</text>
        <dbReference type="Rhea" id="RHEA:22728"/>
        <dbReference type="Rhea" id="RHEA-COMP:9742"/>
        <dbReference type="Rhea" id="RHEA-COMP:9743"/>
        <dbReference type="ChEBI" id="CHEBI:15378"/>
        <dbReference type="ChEBI" id="CHEBI:16144"/>
        <dbReference type="ChEBI" id="CHEBI:43474"/>
        <dbReference type="ChEBI" id="CHEBI:78533"/>
        <dbReference type="ChEBI" id="CHEBI:78573"/>
        <dbReference type="EC" id="2.9.1.1"/>
    </reaction>
</comment>
<comment type="cofactor">
    <cofactor evidence="1">
        <name>pyridoxal 5'-phosphate</name>
        <dbReference type="ChEBI" id="CHEBI:597326"/>
    </cofactor>
</comment>
<comment type="pathway">
    <text evidence="1">Aminoacyl-tRNA biosynthesis; selenocysteinyl-tRNA(Sec) biosynthesis; selenocysteinyl-tRNA(Sec) from L-seryl-tRNA(Sec) (bacterial route): step 1/1.</text>
</comment>
<comment type="subunit">
    <text evidence="1">Homodecamer; pentamer of dimers. Binds only one seryl-tRNA(Sec) per dimer.</text>
</comment>
<comment type="subcellular location">
    <subcellularLocation>
        <location evidence="1">Cytoplasm</location>
    </subcellularLocation>
</comment>
<comment type="similarity">
    <text evidence="1">Belongs to the SelA family.</text>
</comment>
<accession>Q3YVV3</accession>
<evidence type="ECO:0000255" key="1">
    <source>
        <dbReference type="HAMAP-Rule" id="MF_00423"/>
    </source>
</evidence>